<reference key="1">
    <citation type="journal article" date="2005" name="Science">
        <title>Life at depth: Photobacterium profundum genome sequence and expression analysis.</title>
        <authorList>
            <person name="Vezzi A."/>
            <person name="Campanaro S."/>
            <person name="D'Angelo M."/>
            <person name="Simonato F."/>
            <person name="Vitulo N."/>
            <person name="Lauro F.M."/>
            <person name="Cestaro A."/>
            <person name="Malacrida G."/>
            <person name="Simionati B."/>
            <person name="Cannata N."/>
            <person name="Romualdi C."/>
            <person name="Bartlett D.H."/>
            <person name="Valle G."/>
        </authorList>
    </citation>
    <scope>NUCLEOTIDE SEQUENCE [LARGE SCALE GENOMIC DNA]</scope>
    <source>
        <strain>ATCC BAA-1253 / SS9</strain>
    </source>
</reference>
<comment type="function">
    <text evidence="1">Is probably a protein kinase regulator of UbiI activity which is involved in aerobic coenzyme Q (ubiquinone) biosynthesis.</text>
</comment>
<comment type="pathway">
    <text>Cofactor biosynthesis; ubiquinone biosynthesis [regulation].</text>
</comment>
<comment type="subcellular location">
    <subcellularLocation>
        <location evidence="1">Cell inner membrane</location>
        <topology evidence="1">Multi-pass membrane protein</topology>
    </subcellularLocation>
</comment>
<comment type="similarity">
    <text evidence="1">Belongs to the ABC1 family. UbiB subfamily.</text>
</comment>
<evidence type="ECO:0000255" key="1">
    <source>
        <dbReference type="HAMAP-Rule" id="MF_00414"/>
    </source>
</evidence>
<dbReference type="EC" id="2.7.-.-" evidence="1"/>
<dbReference type="EMBL" id="CR378663">
    <property type="protein sequence ID" value="CAG18557.1"/>
    <property type="molecule type" value="Genomic_DNA"/>
</dbReference>
<dbReference type="RefSeq" id="WP_011216935.1">
    <property type="nucleotide sequence ID" value="NC_006370.1"/>
</dbReference>
<dbReference type="SMR" id="Q6LVW8"/>
<dbReference type="STRING" id="298386.PBPRA0118"/>
<dbReference type="KEGG" id="ppr:PBPRA0118"/>
<dbReference type="eggNOG" id="COG0661">
    <property type="taxonomic scope" value="Bacteria"/>
</dbReference>
<dbReference type="HOGENOM" id="CLU_006533_0_0_6"/>
<dbReference type="UniPathway" id="UPA00232"/>
<dbReference type="Proteomes" id="UP000000593">
    <property type="component" value="Chromosome 1"/>
</dbReference>
<dbReference type="GO" id="GO:0005886">
    <property type="term" value="C:plasma membrane"/>
    <property type="evidence" value="ECO:0007669"/>
    <property type="project" value="UniProtKB-SubCell"/>
</dbReference>
<dbReference type="GO" id="GO:0005524">
    <property type="term" value="F:ATP binding"/>
    <property type="evidence" value="ECO:0007669"/>
    <property type="project" value="UniProtKB-KW"/>
</dbReference>
<dbReference type="GO" id="GO:0004672">
    <property type="term" value="F:protein kinase activity"/>
    <property type="evidence" value="ECO:0007669"/>
    <property type="project" value="UniProtKB-UniRule"/>
</dbReference>
<dbReference type="GO" id="GO:0010795">
    <property type="term" value="P:regulation of ubiquinone biosynthetic process"/>
    <property type="evidence" value="ECO:0007669"/>
    <property type="project" value="UniProtKB-UniRule"/>
</dbReference>
<dbReference type="GO" id="GO:0006744">
    <property type="term" value="P:ubiquinone biosynthetic process"/>
    <property type="evidence" value="ECO:0007669"/>
    <property type="project" value="UniProtKB-UniPathway"/>
</dbReference>
<dbReference type="CDD" id="cd13972">
    <property type="entry name" value="UbiB"/>
    <property type="match status" value="1"/>
</dbReference>
<dbReference type="HAMAP" id="MF_00414">
    <property type="entry name" value="UbiB"/>
    <property type="match status" value="1"/>
</dbReference>
<dbReference type="InterPro" id="IPR004147">
    <property type="entry name" value="ABC1_dom"/>
</dbReference>
<dbReference type="InterPro" id="IPR011009">
    <property type="entry name" value="Kinase-like_dom_sf"/>
</dbReference>
<dbReference type="InterPro" id="IPR010232">
    <property type="entry name" value="UbiB"/>
</dbReference>
<dbReference type="InterPro" id="IPR045308">
    <property type="entry name" value="UbiB_bact"/>
</dbReference>
<dbReference type="InterPro" id="IPR050154">
    <property type="entry name" value="UbiB_kinase"/>
</dbReference>
<dbReference type="NCBIfam" id="NF003404">
    <property type="entry name" value="PRK04750.1"/>
    <property type="match status" value="1"/>
</dbReference>
<dbReference type="NCBIfam" id="TIGR01982">
    <property type="entry name" value="UbiB"/>
    <property type="match status" value="1"/>
</dbReference>
<dbReference type="PANTHER" id="PTHR10566">
    <property type="entry name" value="CHAPERONE-ACTIVITY OF BC1 COMPLEX CABC1 -RELATED"/>
    <property type="match status" value="1"/>
</dbReference>
<dbReference type="PANTHER" id="PTHR10566:SF113">
    <property type="entry name" value="PROTEIN ACTIVITY OF BC1 COMPLEX KINASE 7, CHLOROPLASTIC"/>
    <property type="match status" value="1"/>
</dbReference>
<dbReference type="Pfam" id="PF03109">
    <property type="entry name" value="ABC1"/>
    <property type="match status" value="1"/>
</dbReference>
<dbReference type="SUPFAM" id="SSF56112">
    <property type="entry name" value="Protein kinase-like (PK-like)"/>
    <property type="match status" value="1"/>
</dbReference>
<protein>
    <recommendedName>
        <fullName evidence="1">Probable protein kinase UbiB</fullName>
        <ecNumber evidence="1">2.7.-.-</ecNumber>
    </recommendedName>
    <alternativeName>
        <fullName evidence="1">Ubiquinone biosynthesis protein UbiB</fullName>
    </alternativeName>
</protein>
<keyword id="KW-0067">ATP-binding</keyword>
<keyword id="KW-0997">Cell inner membrane</keyword>
<keyword id="KW-1003">Cell membrane</keyword>
<keyword id="KW-0418">Kinase</keyword>
<keyword id="KW-0472">Membrane</keyword>
<keyword id="KW-0547">Nucleotide-binding</keyword>
<keyword id="KW-1185">Reference proteome</keyword>
<keyword id="KW-0808">Transferase</keyword>
<keyword id="KW-0812">Transmembrane</keyword>
<keyword id="KW-1133">Transmembrane helix</keyword>
<keyword id="KW-0831">Ubiquinone biosynthesis</keyword>
<accession>Q6LVW8</accession>
<organism>
    <name type="scientific">Photobacterium profundum (strain SS9)</name>
    <dbReference type="NCBI Taxonomy" id="298386"/>
    <lineage>
        <taxon>Bacteria</taxon>
        <taxon>Pseudomonadati</taxon>
        <taxon>Pseudomonadota</taxon>
        <taxon>Gammaproteobacteria</taxon>
        <taxon>Vibrionales</taxon>
        <taxon>Vibrionaceae</taxon>
        <taxon>Photobacterium</taxon>
    </lineage>
</organism>
<gene>
    <name evidence="1" type="primary">ubiB</name>
    <name type="ordered locus">PBPRA0118</name>
</gene>
<sequence length="545" mass="62988">MITPSEFKRLYKIIEVQLRYGLDDFLPEDPRTKMPKMARKSLFWIKNQHPDKSLGERLRLALQELGPVWIKFGQMMSTRRDLFPPHIADQLALLQDQVEPFDGNLAKEHMELSLGGPIETWFDDFDETPLASASIAQVHTATLKENGREVVLKVIRPDILPVIQADIKLMYRMAHIVARLLPEARLLRPVEVVREYEKTLLDELNMMREAANSIQLRRNFEDSDTLYVPEMFTDYSSTNLLVMERIYGIQVSDIDALIANGTNMKLLSENAVNIFFTQVFRDSFFHADMHPGNIFVSYENPETPQWIALDCGIVGTLNRDDKRYLAENLLAFFHRDYRKVAELHVDSGWVPQDTNIDEFEFAIRTVCEPIFEKPLCDISFGHVLLNLFNTARRFDMEVQPQLMLLQKTLLYVEGLGRQLYPQLDLWITAKPFLEDWMSRQVGPQAIVEAVKSKAPFWAEKLPELPELLYDSLRQGKVMNQRIDKLYDNFMESRRSQGLARFYFGIGATLVVCSAILFSNHVETIPVASAAMGVTFWLLGWRACRK</sequence>
<proteinExistence type="inferred from homology"/>
<name>UBIB_PHOPR</name>
<feature type="chain" id="PRO_0000200712" description="Probable protein kinase UbiB">
    <location>
        <begin position="1"/>
        <end position="545"/>
    </location>
</feature>
<feature type="transmembrane region" description="Helical" evidence="1">
    <location>
        <begin position="498"/>
        <end position="517"/>
    </location>
</feature>
<feature type="transmembrane region" description="Helical" evidence="1">
    <location>
        <begin position="521"/>
        <end position="540"/>
    </location>
</feature>
<feature type="domain" description="Protein kinase" evidence="1">
    <location>
        <begin position="124"/>
        <end position="502"/>
    </location>
</feature>
<feature type="active site" description="Proton acceptor" evidence="1">
    <location>
        <position position="288"/>
    </location>
</feature>
<feature type="binding site" evidence="1">
    <location>
        <begin position="130"/>
        <end position="138"/>
    </location>
    <ligand>
        <name>ATP</name>
        <dbReference type="ChEBI" id="CHEBI:30616"/>
    </ligand>
</feature>
<feature type="binding site" evidence="1">
    <location>
        <position position="153"/>
    </location>
    <ligand>
        <name>ATP</name>
        <dbReference type="ChEBI" id="CHEBI:30616"/>
    </ligand>
</feature>